<keyword id="KW-1003">Cell membrane</keyword>
<keyword id="KW-0325">Glycoprotein</keyword>
<keyword id="KW-0472">Membrane</keyword>
<keyword id="KW-1185">Reference proteome</keyword>
<keyword id="KW-0812">Transmembrane</keyword>
<keyword id="KW-1133">Transmembrane helix</keyword>
<keyword id="KW-0813">Transport</keyword>
<dbReference type="EMBL" id="FO080084">
    <property type="protein sequence ID" value="CCD61134.1"/>
    <property type="molecule type" value="Genomic_DNA"/>
</dbReference>
<dbReference type="PIR" id="T32366">
    <property type="entry name" value="T32366"/>
</dbReference>
<dbReference type="RefSeq" id="NP_493630.2">
    <property type="nucleotide sequence ID" value="NM_061229.4"/>
</dbReference>
<dbReference type="FunCoup" id="O17204">
    <property type="interactions" value="50"/>
</dbReference>
<dbReference type="STRING" id="6239.C01B12.4.1"/>
<dbReference type="GlyCosmos" id="O17204">
    <property type="glycosylation" value="2 sites, No reported glycans"/>
</dbReference>
<dbReference type="PaxDb" id="6239-C01B12.4"/>
<dbReference type="EnsemblMetazoa" id="C01B12.4.1">
    <property type="protein sequence ID" value="C01B12.4.1"/>
    <property type="gene ID" value="WBGene00015287"/>
</dbReference>
<dbReference type="GeneID" id="182062"/>
<dbReference type="KEGG" id="cel:CELE_C01B12.4"/>
<dbReference type="UCSC" id="C01B12.4">
    <property type="organism name" value="c. elegans"/>
</dbReference>
<dbReference type="AGR" id="WB:WBGene00015287"/>
<dbReference type="CTD" id="182062"/>
<dbReference type="WormBase" id="C01B12.4">
    <property type="protein sequence ID" value="CE34642"/>
    <property type="gene ID" value="WBGene00015287"/>
    <property type="gene designation" value="osta-1"/>
</dbReference>
<dbReference type="eggNOG" id="KOG2641">
    <property type="taxonomic scope" value="Eukaryota"/>
</dbReference>
<dbReference type="HOGENOM" id="CLU_061874_1_0_1"/>
<dbReference type="InParanoid" id="O17204"/>
<dbReference type="OMA" id="WLANMSV"/>
<dbReference type="OrthoDB" id="5832279at2759"/>
<dbReference type="PhylomeDB" id="O17204"/>
<dbReference type="PRO" id="PR:O17204"/>
<dbReference type="Proteomes" id="UP000001940">
    <property type="component" value="Chromosome II"/>
</dbReference>
<dbReference type="Bgee" id="WBGene00015287">
    <property type="expression patterns" value="Expressed in larva and 3 other cell types or tissues"/>
</dbReference>
<dbReference type="GO" id="GO:0016020">
    <property type="term" value="C:membrane"/>
    <property type="evidence" value="ECO:0000250"/>
    <property type="project" value="UniProtKB"/>
</dbReference>
<dbReference type="GO" id="GO:1990075">
    <property type="term" value="C:periciliary membrane compartment"/>
    <property type="evidence" value="ECO:0000314"/>
    <property type="project" value="WormBase"/>
</dbReference>
<dbReference type="GO" id="GO:0022857">
    <property type="term" value="F:transmembrane transporter activity"/>
    <property type="evidence" value="ECO:0000318"/>
    <property type="project" value="GO_Central"/>
</dbReference>
<dbReference type="InterPro" id="IPR005178">
    <property type="entry name" value="Ostalpha/TMEM184C"/>
</dbReference>
<dbReference type="PANTHER" id="PTHR23423">
    <property type="entry name" value="ORGANIC SOLUTE TRANSPORTER-RELATED"/>
    <property type="match status" value="1"/>
</dbReference>
<dbReference type="Pfam" id="PF03619">
    <property type="entry name" value="Solute_trans_a"/>
    <property type="match status" value="1"/>
</dbReference>
<dbReference type="SMART" id="SM01417">
    <property type="entry name" value="Solute_trans_a"/>
    <property type="match status" value="1"/>
</dbReference>
<proteinExistence type="inferred from homology"/>
<sequence length="384" mass="44205">MEIVKTIIPHNRSYIEPPIPSATEWLANMSVMHVSCLTIACVFVAITFLSSFFHLFFVLKYVSNERIRNDMYALIFMFPITTFASLVGMFIPRAAIFLYAVSLVYFMFTLFIMVTLLFNIFGGRQEMSAYLLQRNIRVNFTVPPLCFFKFLPTVESTDQNLRRIEWLVFQTPIIRTLLELVSVVVSMEQEGRRESVWFVFSQLMALLSMCIAFYGCYVMVPLGREKHAPYRFDFLFRTCDIAQCIYTIQKFVFEFAAAVGLITSDRYLPAAAKALWWASFMCTWEMMLLSALCSYCLRPAKCKFFDLYPGNDMPALSARDGSNSRVPSFSRRLSIEYEPRIAGVMLEPPSRSSLSITPRDKIEDPTTVSYFADNFDSLSQIQGQ</sequence>
<organism>
    <name type="scientific">Caenorhabditis elegans</name>
    <dbReference type="NCBI Taxonomy" id="6239"/>
    <lineage>
        <taxon>Eukaryota</taxon>
        <taxon>Metazoa</taxon>
        <taxon>Ecdysozoa</taxon>
        <taxon>Nematoda</taxon>
        <taxon>Chromadorea</taxon>
        <taxon>Rhabditida</taxon>
        <taxon>Rhabditina</taxon>
        <taxon>Rhabditomorpha</taxon>
        <taxon>Rhabditoidea</taxon>
        <taxon>Rhabditidae</taxon>
        <taxon>Peloderinae</taxon>
        <taxon>Caenorhabditis</taxon>
    </lineage>
</organism>
<name>OSTA1_CAEEL</name>
<comment type="function">
    <text evidence="1">Probable transporter.</text>
</comment>
<comment type="subcellular location">
    <subcellularLocation>
        <location evidence="1">Cell membrane</location>
        <topology evidence="1">Multi-pass membrane protein</topology>
    </subcellularLocation>
</comment>
<comment type="similarity">
    <text evidence="3">Belongs to the OST-alpha family.</text>
</comment>
<protein>
    <recommendedName>
        <fullName>Organic solute transporter alpha-like protein 1</fullName>
    </recommendedName>
    <alternativeName>
        <fullName>Solute carrier family 51 subunit alpha homolog C</fullName>
    </alternativeName>
</protein>
<accession>O17204</accession>
<reference key="1">
    <citation type="journal article" date="1998" name="Science">
        <title>Genome sequence of the nematode C. elegans: a platform for investigating biology.</title>
        <authorList>
            <consortium name="The C. elegans sequencing consortium"/>
        </authorList>
    </citation>
    <scope>NUCLEOTIDE SEQUENCE [LARGE SCALE GENOMIC DNA]</scope>
    <source>
        <strain>Bristol N2</strain>
    </source>
</reference>
<gene>
    <name type="primary">osta-1</name>
    <name type="ORF">C01B12.4</name>
</gene>
<feature type="chain" id="PRO_0000331550" description="Organic solute transporter alpha-like protein 1">
    <location>
        <begin position="1"/>
        <end position="384"/>
    </location>
</feature>
<feature type="topological domain" description="Extracellular" evidence="2">
    <location>
        <begin position="1"/>
        <end position="38"/>
    </location>
</feature>
<feature type="transmembrane region" description="Helical" evidence="2">
    <location>
        <begin position="39"/>
        <end position="59"/>
    </location>
</feature>
<feature type="topological domain" description="Cytoplasmic" evidence="2">
    <location>
        <begin position="60"/>
        <end position="70"/>
    </location>
</feature>
<feature type="transmembrane region" description="Helical" evidence="2">
    <location>
        <begin position="71"/>
        <end position="91"/>
    </location>
</feature>
<feature type="topological domain" description="Extracellular" evidence="2">
    <location>
        <begin position="92"/>
        <end position="93"/>
    </location>
</feature>
<feature type="transmembrane region" description="Helical" evidence="2">
    <location>
        <begin position="94"/>
        <end position="114"/>
    </location>
</feature>
<feature type="topological domain" description="Cytoplasmic" evidence="2">
    <location>
        <begin position="115"/>
        <end position="165"/>
    </location>
</feature>
<feature type="transmembrane region" description="Helical" evidence="2">
    <location>
        <begin position="166"/>
        <end position="186"/>
    </location>
</feature>
<feature type="topological domain" description="Extracellular" evidence="2">
    <location>
        <begin position="187"/>
        <end position="202"/>
    </location>
</feature>
<feature type="transmembrane region" description="Helical" evidence="2">
    <location>
        <begin position="203"/>
        <end position="223"/>
    </location>
</feature>
<feature type="topological domain" description="Cytoplasmic" evidence="2">
    <location>
        <begin position="224"/>
        <end position="240"/>
    </location>
</feature>
<feature type="transmembrane region" description="Helical" evidence="2">
    <location>
        <begin position="241"/>
        <end position="261"/>
    </location>
</feature>
<feature type="topological domain" description="Extracellular" evidence="2">
    <location>
        <begin position="262"/>
        <end position="273"/>
    </location>
</feature>
<feature type="transmembrane region" description="Helical" evidence="2">
    <location>
        <begin position="274"/>
        <end position="294"/>
    </location>
</feature>
<feature type="topological domain" description="Cytoplasmic" evidence="2">
    <location>
        <begin position="295"/>
        <end position="384"/>
    </location>
</feature>
<feature type="glycosylation site" description="N-linked (GlcNAc...) asparagine" evidence="2">
    <location>
        <position position="11"/>
    </location>
</feature>
<feature type="glycosylation site" description="N-linked (GlcNAc...) asparagine" evidence="2">
    <location>
        <position position="28"/>
    </location>
</feature>
<evidence type="ECO:0000250" key="1"/>
<evidence type="ECO:0000255" key="2"/>
<evidence type="ECO:0000305" key="3"/>